<sequence length="108" mass="11913">MSEVFEITVQPGGERFVCQPQQSALHAMETQGKRCLPVGCRGGGCGLCKVRVLAGDYESGRVSCKHLPVEAREQGYALACRLFARSDLCIERYSKPCSESTVDQQQRE</sequence>
<reference key="1">
    <citation type="journal article" date="1991" name="FEBS Lett.">
        <title>Divergent evolution of chloroplast-type ferredoxins.</title>
        <authorList>
            <person name="Harayama S."/>
            <person name="Polissi A."/>
            <person name="Rekik M."/>
        </authorList>
    </citation>
    <scope>NUCLEOTIDE SEQUENCE [GENOMIC DNA]</scope>
    <source>
        <strain>ATCC 17485 / DSM 50208 / JCM 6158 / NCIMB 12092 / Stanier 111 / Biotype A</strain>
    </source>
</reference>
<reference key="2">
    <citation type="journal article" date="1991" name="Biochemistry">
        <title>Nucleotide sequence analysis of the Pseudomonas putida PpG7 salicylate hydroxylase gene (nahG) and its 3'-flanking region.</title>
        <authorList>
            <person name="You I.-S."/>
            <person name="Ghosal D."/>
            <person name="Gunsalus I.C."/>
        </authorList>
    </citation>
    <scope>NUCLEOTIDE SEQUENCE [GENOMIC DNA]</scope>
    <source>
        <strain>ATCC 17485 / DSM 50208 / JCM 6158 / NCIMB 12092 / Stanier 111 / Biotype A</strain>
    </source>
</reference>
<dbReference type="EMBL" id="X61466">
    <property type="protein sequence ID" value="CAA43701.1"/>
    <property type="molecule type" value="Genomic_DNA"/>
</dbReference>
<dbReference type="EMBL" id="M60055">
    <property type="protein sequence ID" value="AAA25898.1"/>
    <property type="molecule type" value="Genomic_DNA"/>
</dbReference>
<dbReference type="PIR" id="B39181">
    <property type="entry name" value="B39181"/>
</dbReference>
<dbReference type="RefSeq" id="WP_011475387.1">
    <property type="nucleotide sequence ID" value="NC_007926.1"/>
</dbReference>
<dbReference type="RefSeq" id="YP_534832.1">
    <property type="nucleotide sequence ID" value="NC_007926.1"/>
</dbReference>
<dbReference type="SMR" id="P23263"/>
<dbReference type="UniPathway" id="UPA00750"/>
<dbReference type="GO" id="GO:0051537">
    <property type="term" value="F:2 iron, 2 sulfur cluster binding"/>
    <property type="evidence" value="ECO:0007669"/>
    <property type="project" value="UniProtKB-KW"/>
</dbReference>
<dbReference type="GO" id="GO:0046872">
    <property type="term" value="F:metal ion binding"/>
    <property type="evidence" value="ECO:0007669"/>
    <property type="project" value="UniProtKB-KW"/>
</dbReference>
<dbReference type="GO" id="GO:0019614">
    <property type="term" value="P:catechol-containing compound catabolic process"/>
    <property type="evidence" value="ECO:0007669"/>
    <property type="project" value="UniProtKB-UniPathway"/>
</dbReference>
<dbReference type="CDD" id="cd00207">
    <property type="entry name" value="fer2"/>
    <property type="match status" value="1"/>
</dbReference>
<dbReference type="Gene3D" id="3.10.20.30">
    <property type="match status" value="1"/>
</dbReference>
<dbReference type="InterPro" id="IPR036010">
    <property type="entry name" value="2Fe-2S_ferredoxin-like_sf"/>
</dbReference>
<dbReference type="InterPro" id="IPR001041">
    <property type="entry name" value="2Fe-2S_ferredoxin-type"/>
</dbReference>
<dbReference type="InterPro" id="IPR006058">
    <property type="entry name" value="2Fe2S_fd_BS"/>
</dbReference>
<dbReference type="InterPro" id="IPR012675">
    <property type="entry name" value="Beta-grasp_dom_sf"/>
</dbReference>
<dbReference type="Pfam" id="PF00111">
    <property type="entry name" value="Fer2"/>
    <property type="match status" value="1"/>
</dbReference>
<dbReference type="SUPFAM" id="SSF54292">
    <property type="entry name" value="2Fe-2S ferredoxin-like"/>
    <property type="match status" value="1"/>
</dbReference>
<dbReference type="PROSITE" id="PS00197">
    <property type="entry name" value="2FE2S_FER_1"/>
    <property type="match status" value="1"/>
</dbReference>
<dbReference type="PROSITE" id="PS51085">
    <property type="entry name" value="2FE2S_FER_2"/>
    <property type="match status" value="1"/>
</dbReference>
<gene>
    <name type="primary">nahT</name>
</gene>
<proteinExistence type="inferred from homology"/>
<accession>P23263</accession>
<comment type="function">
    <text>Ferredoxins are iron-sulfur proteins that transfer electrons in a wide variety of metabolic reactions.</text>
</comment>
<comment type="pathway">
    <text>Aromatic compound metabolism; catechol degradation.</text>
</comment>
<comment type="similarity">
    <text evidence="2">Belongs to the 2Fe2S plant-type ferredoxin family.</text>
</comment>
<name>FERN_PSEPU</name>
<organism>
    <name type="scientific">Pseudomonas putida</name>
    <name type="common">Arthrobacter siderocapsulatus</name>
    <dbReference type="NCBI Taxonomy" id="303"/>
    <lineage>
        <taxon>Bacteria</taxon>
        <taxon>Pseudomonadati</taxon>
        <taxon>Pseudomonadota</taxon>
        <taxon>Gammaproteobacteria</taxon>
        <taxon>Pseudomonadales</taxon>
        <taxon>Pseudomonadaceae</taxon>
        <taxon>Pseudomonas</taxon>
    </lineage>
</organism>
<feature type="chain" id="PRO_0000189392" description="Ferredoxin, plant-type">
    <location>
        <begin position="1"/>
        <end position="108"/>
    </location>
</feature>
<feature type="domain" description="2Fe-2S ferredoxin-type" evidence="1">
    <location>
        <begin position="5"/>
        <end position="96"/>
    </location>
</feature>
<feature type="binding site" evidence="1">
    <location>
        <position position="40"/>
    </location>
    <ligand>
        <name>[2Fe-2S] cluster</name>
        <dbReference type="ChEBI" id="CHEBI:190135"/>
    </ligand>
</feature>
<feature type="binding site" evidence="1">
    <location>
        <position position="45"/>
    </location>
    <ligand>
        <name>[2Fe-2S] cluster</name>
        <dbReference type="ChEBI" id="CHEBI:190135"/>
    </ligand>
</feature>
<feature type="binding site" evidence="1">
    <location>
        <position position="48"/>
    </location>
    <ligand>
        <name>[2Fe-2S] cluster</name>
        <dbReference type="ChEBI" id="CHEBI:190135"/>
    </ligand>
</feature>
<feature type="binding site" evidence="1">
    <location>
        <position position="80"/>
    </location>
    <ligand>
        <name>[2Fe-2S] cluster</name>
        <dbReference type="ChEBI" id="CHEBI:190135"/>
    </ligand>
</feature>
<evidence type="ECO:0000255" key="1">
    <source>
        <dbReference type="PROSITE-ProRule" id="PRU00465"/>
    </source>
</evidence>
<evidence type="ECO:0000305" key="2"/>
<geneLocation type="plasmid">
    <name>NAH7</name>
</geneLocation>
<protein>
    <recommendedName>
        <fullName>Ferredoxin, plant-type</fullName>
    </recommendedName>
</protein>
<keyword id="KW-0001">2Fe-2S</keyword>
<keyword id="KW-0058">Aromatic hydrocarbons catabolism</keyword>
<keyword id="KW-0249">Electron transport</keyword>
<keyword id="KW-0408">Iron</keyword>
<keyword id="KW-0411">Iron-sulfur</keyword>
<keyword id="KW-0479">Metal-binding</keyword>
<keyword id="KW-0614">Plasmid</keyword>
<keyword id="KW-0813">Transport</keyword>